<protein>
    <recommendedName>
        <fullName evidence="1">Dihydroorotate dehydrogenase (quinone)</fullName>
        <ecNumber evidence="1">1.3.5.2</ecNumber>
    </recommendedName>
    <alternativeName>
        <fullName evidence="1">DHOdehase</fullName>
        <shortName evidence="1">DHOD</shortName>
        <shortName evidence="1">DHODase</shortName>
    </alternativeName>
    <alternativeName>
        <fullName evidence="1">Dihydroorotate oxidase</fullName>
    </alternativeName>
</protein>
<dbReference type="EC" id="1.3.5.2" evidence="1"/>
<dbReference type="EMBL" id="CP000447">
    <property type="protein sequence ID" value="ABI72066.1"/>
    <property type="molecule type" value="Genomic_DNA"/>
</dbReference>
<dbReference type="RefSeq" id="WP_011637676.1">
    <property type="nucleotide sequence ID" value="NC_008345.1"/>
</dbReference>
<dbReference type="SMR" id="Q081J9"/>
<dbReference type="STRING" id="318167.Sfri_2220"/>
<dbReference type="KEGG" id="sfr:Sfri_2220"/>
<dbReference type="eggNOG" id="COG0167">
    <property type="taxonomic scope" value="Bacteria"/>
</dbReference>
<dbReference type="HOGENOM" id="CLU_013640_2_0_6"/>
<dbReference type="OrthoDB" id="9802377at2"/>
<dbReference type="UniPathway" id="UPA00070">
    <property type="reaction ID" value="UER00946"/>
</dbReference>
<dbReference type="Proteomes" id="UP000000684">
    <property type="component" value="Chromosome"/>
</dbReference>
<dbReference type="GO" id="GO:0005737">
    <property type="term" value="C:cytoplasm"/>
    <property type="evidence" value="ECO:0007669"/>
    <property type="project" value="InterPro"/>
</dbReference>
<dbReference type="GO" id="GO:0005886">
    <property type="term" value="C:plasma membrane"/>
    <property type="evidence" value="ECO:0007669"/>
    <property type="project" value="UniProtKB-SubCell"/>
</dbReference>
<dbReference type="GO" id="GO:0106430">
    <property type="term" value="F:dihydroorotate dehydrogenase (quinone) activity"/>
    <property type="evidence" value="ECO:0007669"/>
    <property type="project" value="UniProtKB-EC"/>
</dbReference>
<dbReference type="GO" id="GO:0006207">
    <property type="term" value="P:'de novo' pyrimidine nucleobase biosynthetic process"/>
    <property type="evidence" value="ECO:0007669"/>
    <property type="project" value="InterPro"/>
</dbReference>
<dbReference type="GO" id="GO:0044205">
    <property type="term" value="P:'de novo' UMP biosynthetic process"/>
    <property type="evidence" value="ECO:0007669"/>
    <property type="project" value="UniProtKB-UniRule"/>
</dbReference>
<dbReference type="CDD" id="cd04738">
    <property type="entry name" value="DHOD_2_like"/>
    <property type="match status" value="1"/>
</dbReference>
<dbReference type="FunFam" id="3.20.20.70:FF:000028">
    <property type="entry name" value="Dihydroorotate dehydrogenase (quinone)"/>
    <property type="match status" value="1"/>
</dbReference>
<dbReference type="Gene3D" id="3.20.20.70">
    <property type="entry name" value="Aldolase class I"/>
    <property type="match status" value="1"/>
</dbReference>
<dbReference type="HAMAP" id="MF_00225">
    <property type="entry name" value="DHO_dh_type2"/>
    <property type="match status" value="1"/>
</dbReference>
<dbReference type="InterPro" id="IPR013785">
    <property type="entry name" value="Aldolase_TIM"/>
</dbReference>
<dbReference type="InterPro" id="IPR050074">
    <property type="entry name" value="DHO_dehydrogenase"/>
</dbReference>
<dbReference type="InterPro" id="IPR012135">
    <property type="entry name" value="Dihydroorotate_DH_1_2"/>
</dbReference>
<dbReference type="InterPro" id="IPR005719">
    <property type="entry name" value="Dihydroorotate_DH_2"/>
</dbReference>
<dbReference type="InterPro" id="IPR005720">
    <property type="entry name" value="Dihydroorotate_DH_cat"/>
</dbReference>
<dbReference type="InterPro" id="IPR001295">
    <property type="entry name" value="Dihydroorotate_DH_CS"/>
</dbReference>
<dbReference type="NCBIfam" id="NF003644">
    <property type="entry name" value="PRK05286.1-1"/>
    <property type="match status" value="1"/>
</dbReference>
<dbReference type="NCBIfam" id="NF003645">
    <property type="entry name" value="PRK05286.1-2"/>
    <property type="match status" value="1"/>
</dbReference>
<dbReference type="NCBIfam" id="NF003646">
    <property type="entry name" value="PRK05286.1-4"/>
    <property type="match status" value="1"/>
</dbReference>
<dbReference type="NCBIfam" id="NF003652">
    <property type="entry name" value="PRK05286.2-5"/>
    <property type="match status" value="1"/>
</dbReference>
<dbReference type="NCBIfam" id="TIGR01036">
    <property type="entry name" value="pyrD_sub2"/>
    <property type="match status" value="1"/>
</dbReference>
<dbReference type="PANTHER" id="PTHR48109:SF4">
    <property type="entry name" value="DIHYDROOROTATE DEHYDROGENASE (QUINONE), MITOCHONDRIAL"/>
    <property type="match status" value="1"/>
</dbReference>
<dbReference type="PANTHER" id="PTHR48109">
    <property type="entry name" value="DIHYDROOROTATE DEHYDROGENASE (QUINONE), MITOCHONDRIAL-RELATED"/>
    <property type="match status" value="1"/>
</dbReference>
<dbReference type="Pfam" id="PF01180">
    <property type="entry name" value="DHO_dh"/>
    <property type="match status" value="1"/>
</dbReference>
<dbReference type="PIRSF" id="PIRSF000164">
    <property type="entry name" value="DHO_oxidase"/>
    <property type="match status" value="1"/>
</dbReference>
<dbReference type="SUPFAM" id="SSF51395">
    <property type="entry name" value="FMN-linked oxidoreductases"/>
    <property type="match status" value="1"/>
</dbReference>
<dbReference type="PROSITE" id="PS00911">
    <property type="entry name" value="DHODEHASE_1"/>
    <property type="match status" value="1"/>
</dbReference>
<comment type="function">
    <text evidence="1">Catalyzes the conversion of dihydroorotate to orotate with quinone as electron acceptor.</text>
</comment>
<comment type="catalytic activity">
    <reaction evidence="1">
        <text>(S)-dihydroorotate + a quinone = orotate + a quinol</text>
        <dbReference type="Rhea" id="RHEA:30187"/>
        <dbReference type="ChEBI" id="CHEBI:24646"/>
        <dbReference type="ChEBI" id="CHEBI:30839"/>
        <dbReference type="ChEBI" id="CHEBI:30864"/>
        <dbReference type="ChEBI" id="CHEBI:132124"/>
        <dbReference type="EC" id="1.3.5.2"/>
    </reaction>
</comment>
<comment type="cofactor">
    <cofactor evidence="1">
        <name>FMN</name>
        <dbReference type="ChEBI" id="CHEBI:58210"/>
    </cofactor>
    <text evidence="1">Binds 1 FMN per subunit.</text>
</comment>
<comment type="pathway">
    <text evidence="1">Pyrimidine metabolism; UMP biosynthesis via de novo pathway; orotate from (S)-dihydroorotate (quinone route): step 1/1.</text>
</comment>
<comment type="subunit">
    <text evidence="1">Monomer.</text>
</comment>
<comment type="subcellular location">
    <subcellularLocation>
        <location evidence="1">Cell membrane</location>
        <topology evidence="1">Peripheral membrane protein</topology>
    </subcellularLocation>
</comment>
<comment type="similarity">
    <text evidence="1">Belongs to the dihydroorotate dehydrogenase family. Type 2 subfamily.</text>
</comment>
<reference key="1">
    <citation type="submission" date="2006-08" db="EMBL/GenBank/DDBJ databases">
        <title>Complete sequence of Shewanella frigidimarina NCIMB 400.</title>
        <authorList>
            <consortium name="US DOE Joint Genome Institute"/>
            <person name="Copeland A."/>
            <person name="Lucas S."/>
            <person name="Lapidus A."/>
            <person name="Barry K."/>
            <person name="Detter J.C."/>
            <person name="Glavina del Rio T."/>
            <person name="Hammon N."/>
            <person name="Israni S."/>
            <person name="Dalin E."/>
            <person name="Tice H."/>
            <person name="Pitluck S."/>
            <person name="Fredrickson J.K."/>
            <person name="Kolker E."/>
            <person name="McCuel L.A."/>
            <person name="DiChristina T."/>
            <person name="Nealson K.H."/>
            <person name="Newman D."/>
            <person name="Tiedje J.M."/>
            <person name="Zhou J."/>
            <person name="Romine M.F."/>
            <person name="Culley D.E."/>
            <person name="Serres M."/>
            <person name="Chertkov O."/>
            <person name="Brettin T."/>
            <person name="Bruce D."/>
            <person name="Han C."/>
            <person name="Tapia R."/>
            <person name="Gilna P."/>
            <person name="Schmutz J."/>
            <person name="Larimer F."/>
            <person name="Land M."/>
            <person name="Hauser L."/>
            <person name="Kyrpides N."/>
            <person name="Mikhailova N."/>
            <person name="Richardson P."/>
        </authorList>
    </citation>
    <scope>NUCLEOTIDE SEQUENCE [LARGE SCALE GENOMIC DNA]</scope>
    <source>
        <strain>NCIMB 400</strain>
    </source>
</reference>
<proteinExistence type="inferred from homology"/>
<organism>
    <name type="scientific">Shewanella frigidimarina (strain NCIMB 400)</name>
    <dbReference type="NCBI Taxonomy" id="318167"/>
    <lineage>
        <taxon>Bacteria</taxon>
        <taxon>Pseudomonadati</taxon>
        <taxon>Pseudomonadota</taxon>
        <taxon>Gammaproteobacteria</taxon>
        <taxon>Alteromonadales</taxon>
        <taxon>Shewanellaceae</taxon>
        <taxon>Shewanella</taxon>
    </lineage>
</organism>
<accession>Q081J9</accession>
<gene>
    <name evidence="1" type="primary">pyrD</name>
    <name type="ordered locus">Sfri_2220</name>
</gene>
<name>PYRD_SHEFN</name>
<feature type="chain" id="PRO_1000024223" description="Dihydroorotate dehydrogenase (quinone)">
    <location>
        <begin position="1"/>
        <end position="339"/>
    </location>
</feature>
<feature type="active site" description="Nucleophile" evidence="1">
    <location>
        <position position="175"/>
    </location>
</feature>
<feature type="binding site" evidence="1">
    <location>
        <begin position="62"/>
        <end position="66"/>
    </location>
    <ligand>
        <name>FMN</name>
        <dbReference type="ChEBI" id="CHEBI:58210"/>
    </ligand>
</feature>
<feature type="binding site" evidence="1">
    <location>
        <position position="66"/>
    </location>
    <ligand>
        <name>substrate</name>
    </ligand>
</feature>
<feature type="binding site" evidence="1">
    <location>
        <position position="86"/>
    </location>
    <ligand>
        <name>FMN</name>
        <dbReference type="ChEBI" id="CHEBI:58210"/>
    </ligand>
</feature>
<feature type="binding site" evidence="1">
    <location>
        <begin position="111"/>
        <end position="115"/>
    </location>
    <ligand>
        <name>substrate</name>
    </ligand>
</feature>
<feature type="binding site" evidence="1">
    <location>
        <position position="139"/>
    </location>
    <ligand>
        <name>FMN</name>
        <dbReference type="ChEBI" id="CHEBI:58210"/>
    </ligand>
</feature>
<feature type="binding site" evidence="1">
    <location>
        <position position="172"/>
    </location>
    <ligand>
        <name>FMN</name>
        <dbReference type="ChEBI" id="CHEBI:58210"/>
    </ligand>
</feature>
<feature type="binding site" evidence="1">
    <location>
        <position position="172"/>
    </location>
    <ligand>
        <name>substrate</name>
    </ligand>
</feature>
<feature type="binding site" evidence="1">
    <location>
        <position position="177"/>
    </location>
    <ligand>
        <name>substrate</name>
    </ligand>
</feature>
<feature type="binding site" evidence="1">
    <location>
        <position position="217"/>
    </location>
    <ligand>
        <name>FMN</name>
        <dbReference type="ChEBI" id="CHEBI:58210"/>
    </ligand>
</feature>
<feature type="binding site" evidence="1">
    <location>
        <position position="245"/>
    </location>
    <ligand>
        <name>FMN</name>
        <dbReference type="ChEBI" id="CHEBI:58210"/>
    </ligand>
</feature>
<feature type="binding site" evidence="1">
    <location>
        <begin position="246"/>
        <end position="247"/>
    </location>
    <ligand>
        <name>substrate</name>
    </ligand>
</feature>
<feature type="binding site" evidence="1">
    <location>
        <position position="268"/>
    </location>
    <ligand>
        <name>FMN</name>
        <dbReference type="ChEBI" id="CHEBI:58210"/>
    </ligand>
</feature>
<feature type="binding site" evidence="1">
    <location>
        <position position="297"/>
    </location>
    <ligand>
        <name>FMN</name>
        <dbReference type="ChEBI" id="CHEBI:58210"/>
    </ligand>
</feature>
<feature type="binding site" evidence="1">
    <location>
        <begin position="318"/>
        <end position="319"/>
    </location>
    <ligand>
        <name>FMN</name>
        <dbReference type="ChEBI" id="CHEBI:58210"/>
    </ligand>
</feature>
<evidence type="ECO:0000255" key="1">
    <source>
        <dbReference type="HAMAP-Rule" id="MF_00225"/>
    </source>
</evidence>
<keyword id="KW-1003">Cell membrane</keyword>
<keyword id="KW-0285">Flavoprotein</keyword>
<keyword id="KW-0288">FMN</keyword>
<keyword id="KW-0472">Membrane</keyword>
<keyword id="KW-0560">Oxidoreductase</keyword>
<keyword id="KW-0665">Pyrimidine biosynthesis</keyword>
<keyword id="KW-1185">Reference proteome</keyword>
<sequence length="339" mass="36597">MFYKLAQKVMFQMDPELAHNIAIGSLKMTGNNLLNCFYRQQVKSSPVTCMGLTFPNPVGLAAGLDKDGESIDAFHAMGFGHVEVGTVTPRPQAGNDQPRLFRLKPAKGIINRMGFNNKGVDNLVRNLMAKKSDIMVGVNIGKNKDTPVEQGKDDYLICMEKVYQYASYIAVNISSPNTPGLRSMQYGELLDDLLSSIKAKQTELAAKHGKYVPVALKIAPDLTSEEISAIADSLMSNQFDGVIATNTTLSRDTVTDLKHAEEMGGLSGKPLADLSTQVIKQLAICLQGKIPIIGVGGINSAADALAKFDAGSTMVQIYSGFIYQGPKLVDQIARAYCAK</sequence>